<protein>
    <recommendedName>
        <fullName>U2 small nuclear ribonucleoprotein B''</fullName>
        <shortName>U2 snRNP B''</shortName>
    </recommendedName>
</protein>
<gene>
    <name type="primary">Snrpb2</name>
</gene>
<name>RU2B_MOUSE</name>
<proteinExistence type="evidence at protein level"/>
<reference key="1">
    <citation type="journal article" date="2005" name="Science">
        <title>The transcriptional landscape of the mammalian genome.</title>
        <authorList>
            <person name="Carninci P."/>
            <person name="Kasukawa T."/>
            <person name="Katayama S."/>
            <person name="Gough J."/>
            <person name="Frith M.C."/>
            <person name="Maeda N."/>
            <person name="Oyama R."/>
            <person name="Ravasi T."/>
            <person name="Lenhard B."/>
            <person name="Wells C."/>
            <person name="Kodzius R."/>
            <person name="Shimokawa K."/>
            <person name="Bajic V.B."/>
            <person name="Brenner S.E."/>
            <person name="Batalov S."/>
            <person name="Forrest A.R."/>
            <person name="Zavolan M."/>
            <person name="Davis M.J."/>
            <person name="Wilming L.G."/>
            <person name="Aidinis V."/>
            <person name="Allen J.E."/>
            <person name="Ambesi-Impiombato A."/>
            <person name="Apweiler R."/>
            <person name="Aturaliya R.N."/>
            <person name="Bailey T.L."/>
            <person name="Bansal M."/>
            <person name="Baxter L."/>
            <person name="Beisel K.W."/>
            <person name="Bersano T."/>
            <person name="Bono H."/>
            <person name="Chalk A.M."/>
            <person name="Chiu K.P."/>
            <person name="Choudhary V."/>
            <person name="Christoffels A."/>
            <person name="Clutterbuck D.R."/>
            <person name="Crowe M.L."/>
            <person name="Dalla E."/>
            <person name="Dalrymple B.P."/>
            <person name="de Bono B."/>
            <person name="Della Gatta G."/>
            <person name="di Bernardo D."/>
            <person name="Down T."/>
            <person name="Engstrom P."/>
            <person name="Fagiolini M."/>
            <person name="Faulkner G."/>
            <person name="Fletcher C.F."/>
            <person name="Fukushima T."/>
            <person name="Furuno M."/>
            <person name="Futaki S."/>
            <person name="Gariboldi M."/>
            <person name="Georgii-Hemming P."/>
            <person name="Gingeras T.R."/>
            <person name="Gojobori T."/>
            <person name="Green R.E."/>
            <person name="Gustincich S."/>
            <person name="Harbers M."/>
            <person name="Hayashi Y."/>
            <person name="Hensch T.K."/>
            <person name="Hirokawa N."/>
            <person name="Hill D."/>
            <person name="Huminiecki L."/>
            <person name="Iacono M."/>
            <person name="Ikeo K."/>
            <person name="Iwama A."/>
            <person name="Ishikawa T."/>
            <person name="Jakt M."/>
            <person name="Kanapin A."/>
            <person name="Katoh M."/>
            <person name="Kawasawa Y."/>
            <person name="Kelso J."/>
            <person name="Kitamura H."/>
            <person name="Kitano H."/>
            <person name="Kollias G."/>
            <person name="Krishnan S.P."/>
            <person name="Kruger A."/>
            <person name="Kummerfeld S.K."/>
            <person name="Kurochkin I.V."/>
            <person name="Lareau L.F."/>
            <person name="Lazarevic D."/>
            <person name="Lipovich L."/>
            <person name="Liu J."/>
            <person name="Liuni S."/>
            <person name="McWilliam S."/>
            <person name="Madan Babu M."/>
            <person name="Madera M."/>
            <person name="Marchionni L."/>
            <person name="Matsuda H."/>
            <person name="Matsuzawa S."/>
            <person name="Miki H."/>
            <person name="Mignone F."/>
            <person name="Miyake S."/>
            <person name="Morris K."/>
            <person name="Mottagui-Tabar S."/>
            <person name="Mulder N."/>
            <person name="Nakano N."/>
            <person name="Nakauchi H."/>
            <person name="Ng P."/>
            <person name="Nilsson R."/>
            <person name="Nishiguchi S."/>
            <person name="Nishikawa S."/>
            <person name="Nori F."/>
            <person name="Ohara O."/>
            <person name="Okazaki Y."/>
            <person name="Orlando V."/>
            <person name="Pang K.C."/>
            <person name="Pavan W.J."/>
            <person name="Pavesi G."/>
            <person name="Pesole G."/>
            <person name="Petrovsky N."/>
            <person name="Piazza S."/>
            <person name="Reed J."/>
            <person name="Reid J.F."/>
            <person name="Ring B.Z."/>
            <person name="Ringwald M."/>
            <person name="Rost B."/>
            <person name="Ruan Y."/>
            <person name="Salzberg S.L."/>
            <person name="Sandelin A."/>
            <person name="Schneider C."/>
            <person name="Schoenbach C."/>
            <person name="Sekiguchi K."/>
            <person name="Semple C.A."/>
            <person name="Seno S."/>
            <person name="Sessa L."/>
            <person name="Sheng Y."/>
            <person name="Shibata Y."/>
            <person name="Shimada H."/>
            <person name="Shimada K."/>
            <person name="Silva D."/>
            <person name="Sinclair B."/>
            <person name="Sperling S."/>
            <person name="Stupka E."/>
            <person name="Sugiura K."/>
            <person name="Sultana R."/>
            <person name="Takenaka Y."/>
            <person name="Taki K."/>
            <person name="Tammoja K."/>
            <person name="Tan S.L."/>
            <person name="Tang S."/>
            <person name="Taylor M.S."/>
            <person name="Tegner J."/>
            <person name="Teichmann S.A."/>
            <person name="Ueda H.R."/>
            <person name="van Nimwegen E."/>
            <person name="Verardo R."/>
            <person name="Wei C.L."/>
            <person name="Yagi K."/>
            <person name="Yamanishi H."/>
            <person name="Zabarovsky E."/>
            <person name="Zhu S."/>
            <person name="Zimmer A."/>
            <person name="Hide W."/>
            <person name="Bult C."/>
            <person name="Grimmond S.M."/>
            <person name="Teasdale R.D."/>
            <person name="Liu E.T."/>
            <person name="Brusic V."/>
            <person name="Quackenbush J."/>
            <person name="Wahlestedt C."/>
            <person name="Mattick J.S."/>
            <person name="Hume D.A."/>
            <person name="Kai C."/>
            <person name="Sasaki D."/>
            <person name="Tomaru Y."/>
            <person name="Fukuda S."/>
            <person name="Kanamori-Katayama M."/>
            <person name="Suzuki M."/>
            <person name="Aoki J."/>
            <person name="Arakawa T."/>
            <person name="Iida J."/>
            <person name="Imamura K."/>
            <person name="Itoh M."/>
            <person name="Kato T."/>
            <person name="Kawaji H."/>
            <person name="Kawagashira N."/>
            <person name="Kawashima T."/>
            <person name="Kojima M."/>
            <person name="Kondo S."/>
            <person name="Konno H."/>
            <person name="Nakano K."/>
            <person name="Ninomiya N."/>
            <person name="Nishio T."/>
            <person name="Okada M."/>
            <person name="Plessy C."/>
            <person name="Shibata K."/>
            <person name="Shiraki T."/>
            <person name="Suzuki S."/>
            <person name="Tagami M."/>
            <person name="Waki K."/>
            <person name="Watahiki A."/>
            <person name="Okamura-Oho Y."/>
            <person name="Suzuki H."/>
            <person name="Kawai J."/>
            <person name="Hayashizaki Y."/>
        </authorList>
    </citation>
    <scope>NUCLEOTIDE SEQUENCE [LARGE SCALE MRNA]</scope>
    <source>
        <strain>C57BL/6J</strain>
        <tissue>Cerebellum</tissue>
        <tissue>Head</tissue>
    </source>
</reference>
<reference key="2">
    <citation type="journal article" date="2004" name="Genome Res.">
        <title>The status, quality, and expansion of the NIH full-length cDNA project: the Mammalian Gene Collection (MGC).</title>
        <authorList>
            <consortium name="The MGC Project Team"/>
        </authorList>
    </citation>
    <scope>NUCLEOTIDE SEQUENCE [LARGE SCALE MRNA]</scope>
    <source>
        <strain>FVB/N</strain>
        <tissue>Mammary tumor</tissue>
    </source>
</reference>
<reference key="3">
    <citation type="journal article" date="2010" name="Cell">
        <title>A tissue-specific atlas of mouse protein phosphorylation and expression.</title>
        <authorList>
            <person name="Huttlin E.L."/>
            <person name="Jedrychowski M.P."/>
            <person name="Elias J.E."/>
            <person name="Goswami T."/>
            <person name="Rad R."/>
            <person name="Beausoleil S.A."/>
            <person name="Villen J."/>
            <person name="Haas W."/>
            <person name="Sowa M.E."/>
            <person name="Gygi S.P."/>
        </authorList>
    </citation>
    <scope>IDENTIFICATION BY MASS SPECTROMETRY [LARGE SCALE ANALYSIS]</scope>
    <source>
        <tissue>Heart</tissue>
        <tissue>Testis</tissue>
    </source>
</reference>
<reference key="4">
    <citation type="journal article" date="2013" name="Mol. Cell">
        <title>SIRT5-mediated lysine desuccinylation impacts diverse metabolic pathways.</title>
        <authorList>
            <person name="Park J."/>
            <person name="Chen Y."/>
            <person name="Tishkoff D.X."/>
            <person name="Peng C."/>
            <person name="Tan M."/>
            <person name="Dai L."/>
            <person name="Xie Z."/>
            <person name="Zhang Y."/>
            <person name="Zwaans B.M."/>
            <person name="Skinner M.E."/>
            <person name="Lombard D.B."/>
            <person name="Zhao Y."/>
        </authorList>
    </citation>
    <scope>ACETYLATION [LARGE SCALE ANALYSIS] AT LYS-111</scope>
    <scope>IDENTIFICATION BY MASS SPECTROMETRY [LARGE SCALE ANALYSIS]</scope>
    <source>
        <tissue>Embryonic fibroblast</tissue>
    </source>
</reference>
<evidence type="ECO:0000250" key="1">
    <source>
        <dbReference type="UniProtKB" id="P08579"/>
    </source>
</evidence>
<evidence type="ECO:0000255" key="2">
    <source>
        <dbReference type="PROSITE-ProRule" id="PRU00176"/>
    </source>
</evidence>
<evidence type="ECO:0000256" key="3">
    <source>
        <dbReference type="SAM" id="MobiDB-lite"/>
    </source>
</evidence>
<evidence type="ECO:0000305" key="4"/>
<evidence type="ECO:0007744" key="5">
    <source>
    </source>
</evidence>
<accession>Q9CQI7</accession>
<accession>Q9CW35</accession>
<accession>Q9CZ66</accession>
<feature type="chain" id="PRO_0000081893" description="U2 small nuclear ribonucleoprotein B''">
    <location>
        <begin position="1"/>
        <end position="225"/>
    </location>
</feature>
<feature type="domain" description="RRM 1" evidence="2">
    <location>
        <begin position="7"/>
        <end position="86"/>
    </location>
</feature>
<feature type="domain" description="RRM 2" evidence="2">
    <location>
        <begin position="151"/>
        <end position="225"/>
    </location>
</feature>
<feature type="region of interest" description="Disordered" evidence="3">
    <location>
        <begin position="100"/>
        <end position="144"/>
    </location>
</feature>
<feature type="compositionally biased region" description="Low complexity" evidence="3">
    <location>
        <begin position="113"/>
        <end position="123"/>
    </location>
</feature>
<feature type="compositionally biased region" description="Polar residues" evidence="3">
    <location>
        <begin position="127"/>
        <end position="140"/>
    </location>
</feature>
<feature type="modified residue" description="N6-acetyllysine; alternate" evidence="5">
    <location>
        <position position="111"/>
    </location>
</feature>
<feature type="modified residue" description="Phosphotyrosine" evidence="1">
    <location>
        <position position="151"/>
    </location>
</feature>
<feature type="cross-link" description="Glycyl lysine isopeptide (Lys-Gly) (interchain with G-Cter in SUMO2); alternate" evidence="1">
    <location>
        <position position="111"/>
    </location>
</feature>
<feature type="sequence conflict" description="In Ref. 1; BAB28565." evidence="4" ref="1">
    <original>N</original>
    <variation>Y</variation>
    <location>
        <position position="196"/>
    </location>
</feature>
<organism>
    <name type="scientific">Mus musculus</name>
    <name type="common">Mouse</name>
    <dbReference type="NCBI Taxonomy" id="10090"/>
    <lineage>
        <taxon>Eukaryota</taxon>
        <taxon>Metazoa</taxon>
        <taxon>Chordata</taxon>
        <taxon>Craniata</taxon>
        <taxon>Vertebrata</taxon>
        <taxon>Euteleostomi</taxon>
        <taxon>Mammalia</taxon>
        <taxon>Eutheria</taxon>
        <taxon>Euarchontoglires</taxon>
        <taxon>Glires</taxon>
        <taxon>Rodentia</taxon>
        <taxon>Myomorpha</taxon>
        <taxon>Muroidea</taxon>
        <taxon>Muridae</taxon>
        <taxon>Murinae</taxon>
        <taxon>Mus</taxon>
        <taxon>Mus</taxon>
    </lineage>
</organism>
<keyword id="KW-0007">Acetylation</keyword>
<keyword id="KW-1017">Isopeptide bond</keyword>
<keyword id="KW-0507">mRNA processing</keyword>
<keyword id="KW-0508">mRNA splicing</keyword>
<keyword id="KW-0539">Nucleus</keyword>
<keyword id="KW-0597">Phosphoprotein</keyword>
<keyword id="KW-1185">Reference proteome</keyword>
<keyword id="KW-0677">Repeat</keyword>
<keyword id="KW-0687">Ribonucleoprotein</keyword>
<keyword id="KW-0694">RNA-binding</keyword>
<keyword id="KW-0747">Spliceosome</keyword>
<keyword id="KW-0832">Ubl conjugation</keyword>
<comment type="function">
    <text evidence="1">Involved in pre-mRNA splicing as component of the spliceosome. Associated with sn-RNP U2, where it contributes to the binding of stem loop IV of U2 snRNA.</text>
</comment>
<comment type="subunit">
    <text evidence="1">Identified in the spliceosome B complex. Identified in the spliceosome C complex. Present in a spliceosome complex assembled in vitro, and composed of SNRPB2, HPRP8BP and CRNKL1. Contributes to the binding of stem loop IV of U2 snRNA with SNRPP1.</text>
</comment>
<comment type="subcellular location">
    <subcellularLocation>
        <location evidence="1">Nucleus</location>
    </subcellularLocation>
</comment>
<comment type="similarity">
    <text evidence="4">Belongs to the RRM U1 A/B'' family.</text>
</comment>
<dbReference type="EMBL" id="AK005107">
    <property type="protein sequence ID" value="BAB23823.1"/>
    <property type="molecule type" value="mRNA"/>
</dbReference>
<dbReference type="EMBL" id="AK011274">
    <property type="protein sequence ID" value="BAB27510.1"/>
    <property type="molecule type" value="mRNA"/>
</dbReference>
<dbReference type="EMBL" id="AK012944">
    <property type="protein sequence ID" value="BAB28565.1"/>
    <property type="molecule type" value="mRNA"/>
</dbReference>
<dbReference type="EMBL" id="AK013871">
    <property type="protein sequence ID" value="BAB29026.1"/>
    <property type="molecule type" value="mRNA"/>
</dbReference>
<dbReference type="EMBL" id="BC026794">
    <property type="protein sequence ID" value="AAH26794.1"/>
    <property type="molecule type" value="mRNA"/>
</dbReference>
<dbReference type="CCDS" id="CCDS16808.1"/>
<dbReference type="RefSeq" id="NP_067310.1">
    <property type="nucleotide sequence ID" value="NM_021335.3"/>
</dbReference>
<dbReference type="SMR" id="Q9CQI7"/>
<dbReference type="BioGRID" id="203378">
    <property type="interactions" value="2"/>
</dbReference>
<dbReference type="FunCoup" id="Q9CQI7">
    <property type="interactions" value="3860"/>
</dbReference>
<dbReference type="IntAct" id="Q9CQI7">
    <property type="interactions" value="2"/>
</dbReference>
<dbReference type="MINT" id="Q9CQI7"/>
<dbReference type="STRING" id="10090.ENSMUSP00000008477"/>
<dbReference type="GlyGen" id="Q9CQI7">
    <property type="glycosylation" value="1 site, 1 O-linked glycan (1 site)"/>
</dbReference>
<dbReference type="iPTMnet" id="Q9CQI7"/>
<dbReference type="PhosphoSitePlus" id="Q9CQI7"/>
<dbReference type="jPOST" id="Q9CQI7"/>
<dbReference type="PaxDb" id="10090-ENSMUSP00000008477"/>
<dbReference type="PeptideAtlas" id="Q9CQI7"/>
<dbReference type="ProteomicsDB" id="262726"/>
<dbReference type="Pumba" id="Q9CQI7"/>
<dbReference type="Antibodypedia" id="24425">
    <property type="antibodies" value="246 antibodies from 23 providers"/>
</dbReference>
<dbReference type="DNASU" id="20639"/>
<dbReference type="Ensembl" id="ENSMUST00000008477.13">
    <property type="protein sequence ID" value="ENSMUSP00000008477.7"/>
    <property type="gene ID" value="ENSMUSG00000008333.13"/>
</dbReference>
<dbReference type="GeneID" id="20639"/>
<dbReference type="KEGG" id="mmu:20639"/>
<dbReference type="UCSC" id="uc008mqb.1">
    <property type="organism name" value="mouse"/>
</dbReference>
<dbReference type="AGR" id="MGI:104805"/>
<dbReference type="CTD" id="6629"/>
<dbReference type="MGI" id="MGI:104805">
    <property type="gene designation" value="Snrpb2"/>
</dbReference>
<dbReference type="VEuPathDB" id="HostDB:ENSMUSG00000008333"/>
<dbReference type="eggNOG" id="KOG4206">
    <property type="taxonomic scope" value="Eukaryota"/>
</dbReference>
<dbReference type="GeneTree" id="ENSGT00390000007046"/>
<dbReference type="HOGENOM" id="CLU_041869_1_1_1"/>
<dbReference type="InParanoid" id="Q9CQI7"/>
<dbReference type="OMA" id="LKKGWVM"/>
<dbReference type="OrthoDB" id="277802at2759"/>
<dbReference type="PhylomeDB" id="Q9CQI7"/>
<dbReference type="TreeFam" id="TF313834"/>
<dbReference type="Reactome" id="R-MMU-72163">
    <property type="pathway name" value="mRNA Splicing - Major Pathway"/>
</dbReference>
<dbReference type="BioGRID-ORCS" id="20639">
    <property type="hits" value="15 hits in 77 CRISPR screens"/>
</dbReference>
<dbReference type="ChiTaRS" id="Snrpb2">
    <property type="organism name" value="mouse"/>
</dbReference>
<dbReference type="PRO" id="PR:Q9CQI7"/>
<dbReference type="Proteomes" id="UP000000589">
    <property type="component" value="Chromosome 2"/>
</dbReference>
<dbReference type="RNAct" id="Q9CQI7">
    <property type="molecule type" value="protein"/>
</dbReference>
<dbReference type="Bgee" id="ENSMUSG00000008333">
    <property type="expression patterns" value="Expressed in medial ganglionic eminence and 258 other cell types or tissues"/>
</dbReference>
<dbReference type="ExpressionAtlas" id="Q9CQI7">
    <property type="expression patterns" value="baseline and differential"/>
</dbReference>
<dbReference type="GO" id="GO:0036464">
    <property type="term" value="C:cytoplasmic ribonucleoprotein granule"/>
    <property type="evidence" value="ECO:0007669"/>
    <property type="project" value="Ensembl"/>
</dbReference>
<dbReference type="GO" id="GO:0001650">
    <property type="term" value="C:fibrillar center"/>
    <property type="evidence" value="ECO:0007669"/>
    <property type="project" value="Ensembl"/>
</dbReference>
<dbReference type="GO" id="GO:0016607">
    <property type="term" value="C:nuclear speck"/>
    <property type="evidence" value="ECO:0007669"/>
    <property type="project" value="Ensembl"/>
</dbReference>
<dbReference type="GO" id="GO:0005634">
    <property type="term" value="C:nucleus"/>
    <property type="evidence" value="ECO:0000250"/>
    <property type="project" value="UniProtKB"/>
</dbReference>
<dbReference type="GO" id="GO:0005686">
    <property type="term" value="C:U2 snRNP"/>
    <property type="evidence" value="ECO:0007669"/>
    <property type="project" value="Ensembl"/>
</dbReference>
<dbReference type="GO" id="GO:0071007">
    <property type="term" value="C:U2-type catalytic step 2 spliceosome"/>
    <property type="evidence" value="ECO:0000250"/>
    <property type="project" value="UniProtKB"/>
</dbReference>
<dbReference type="GO" id="GO:0071005">
    <property type="term" value="C:U2-type precatalytic spliceosome"/>
    <property type="evidence" value="ECO:0007669"/>
    <property type="project" value="Ensembl"/>
</dbReference>
<dbReference type="GO" id="GO:0005684">
    <property type="term" value="C:U2-type spliceosomal complex"/>
    <property type="evidence" value="ECO:0000250"/>
    <property type="project" value="UniProtKB"/>
</dbReference>
<dbReference type="GO" id="GO:0003723">
    <property type="term" value="F:RNA binding"/>
    <property type="evidence" value="ECO:0007669"/>
    <property type="project" value="UniProtKB-KW"/>
</dbReference>
<dbReference type="GO" id="GO:0000398">
    <property type="term" value="P:mRNA splicing, via spliceosome"/>
    <property type="evidence" value="ECO:0000250"/>
    <property type="project" value="UniProtKB"/>
</dbReference>
<dbReference type="CDD" id="cd12478">
    <property type="entry name" value="RRM1_U2B"/>
    <property type="match status" value="1"/>
</dbReference>
<dbReference type="CDD" id="cd12481">
    <property type="entry name" value="RRM2_U2B"/>
    <property type="match status" value="1"/>
</dbReference>
<dbReference type="FunFam" id="3.30.70.330:FF:000039">
    <property type="entry name" value="U1 small nuclear ribonucleoprotein A"/>
    <property type="match status" value="1"/>
</dbReference>
<dbReference type="FunFam" id="3.30.70.330:FF:000029">
    <property type="entry name" value="U2 small nuclear ribonucleoprotein B"/>
    <property type="match status" value="1"/>
</dbReference>
<dbReference type="Gene3D" id="3.30.70.330">
    <property type="match status" value="2"/>
</dbReference>
<dbReference type="InterPro" id="IPR012677">
    <property type="entry name" value="Nucleotide-bd_a/b_plait_sf"/>
</dbReference>
<dbReference type="InterPro" id="IPR035979">
    <property type="entry name" value="RBD_domain_sf"/>
</dbReference>
<dbReference type="InterPro" id="IPR000504">
    <property type="entry name" value="RRM_dom"/>
</dbReference>
<dbReference type="InterPro" id="IPR034564">
    <property type="entry name" value="U2B''_RRM1"/>
</dbReference>
<dbReference type="InterPro" id="IPR034562">
    <property type="entry name" value="U2B''_RRM2"/>
</dbReference>
<dbReference type="PANTHER" id="PTHR10501">
    <property type="entry name" value="U1 SMALL NUCLEAR RIBONUCLEOPROTEIN A/U2 SMALL NUCLEAR RIBONUCLEOPROTEIN B"/>
    <property type="match status" value="1"/>
</dbReference>
<dbReference type="Pfam" id="PF00076">
    <property type="entry name" value="RRM_1"/>
    <property type="match status" value="2"/>
</dbReference>
<dbReference type="SMART" id="SM00360">
    <property type="entry name" value="RRM"/>
    <property type="match status" value="2"/>
</dbReference>
<dbReference type="SUPFAM" id="SSF54928">
    <property type="entry name" value="RNA-binding domain, RBD"/>
    <property type="match status" value="1"/>
</dbReference>
<dbReference type="PROSITE" id="PS50102">
    <property type="entry name" value="RRM"/>
    <property type="match status" value="2"/>
</dbReference>
<sequence length="225" mass="25323">MDIRPNHTIYINNMNDKIKKEELKRSLYALFSQFGHVVDIVALKTMKMRGQAFVIFKELGSSTNALRQLQGFPFYGKPMRIQYAKTDSDIISKMRGTFADKEKKKEKKKAKTMEQAAAAANKKPGQGTPNAANTQGTAAPNPQVPDYPPNYILFLNNLPEETNEMMLSMLFNQFPGFKEVRLVPGRHDIAFVEFENDGQAGAARDALQGFKITPSHAMKITYAKK</sequence>